<name>MNMA_DESAP</name>
<sequence>MATVAVALSGGVDSSTTALLMKEAGHRVFTLTMATNDRVAAEAARVSAFLGLPHHVLDISGLFEQRVIGPFCAAYLEGRTPNPCIACNRDLKYGTLFRQAVEWGADYFATGHYARVRFEPEPGRYVLLRARDPRKDQSYVLFYLDQERLARLLLPLGDLTKETVREKARAAGIPFTAAESQEICFVAGDDYRTFIRRRCGQAVAEGPFVDRQGNVLGRHRGIPFYTIGQRRGLGLALGRPVFVLGFNRERNAVIVGPEEELWHTAFLAVDVHYILPQPAGGTLIEAQIRYRAKAAPARLYPQPPDAARVVFEKPQRAITPGQAAVFYQGERVVGGGIISCAVR</sequence>
<protein>
    <recommendedName>
        <fullName evidence="1">tRNA-specific 2-thiouridylase MnmA</fullName>
        <ecNumber evidence="1">2.8.1.13</ecNumber>
    </recommendedName>
</protein>
<comment type="function">
    <text evidence="1">Catalyzes the 2-thiolation of uridine at the wobble position (U34) of tRNA, leading to the formation of s(2)U34.</text>
</comment>
<comment type="catalytic activity">
    <reaction evidence="1">
        <text>S-sulfanyl-L-cysteinyl-[protein] + uridine(34) in tRNA + AH2 + ATP = 2-thiouridine(34) in tRNA + L-cysteinyl-[protein] + A + AMP + diphosphate + H(+)</text>
        <dbReference type="Rhea" id="RHEA:47032"/>
        <dbReference type="Rhea" id="RHEA-COMP:10131"/>
        <dbReference type="Rhea" id="RHEA-COMP:11726"/>
        <dbReference type="Rhea" id="RHEA-COMP:11727"/>
        <dbReference type="Rhea" id="RHEA-COMP:11728"/>
        <dbReference type="ChEBI" id="CHEBI:13193"/>
        <dbReference type="ChEBI" id="CHEBI:15378"/>
        <dbReference type="ChEBI" id="CHEBI:17499"/>
        <dbReference type="ChEBI" id="CHEBI:29950"/>
        <dbReference type="ChEBI" id="CHEBI:30616"/>
        <dbReference type="ChEBI" id="CHEBI:33019"/>
        <dbReference type="ChEBI" id="CHEBI:61963"/>
        <dbReference type="ChEBI" id="CHEBI:65315"/>
        <dbReference type="ChEBI" id="CHEBI:87170"/>
        <dbReference type="ChEBI" id="CHEBI:456215"/>
        <dbReference type="EC" id="2.8.1.13"/>
    </reaction>
</comment>
<comment type="subcellular location">
    <subcellularLocation>
        <location evidence="1">Cytoplasm</location>
    </subcellularLocation>
</comment>
<comment type="similarity">
    <text evidence="1">Belongs to the MnmA/TRMU family.</text>
</comment>
<feature type="chain" id="PRO_0000349613" description="tRNA-specific 2-thiouridylase MnmA">
    <location>
        <begin position="1"/>
        <end position="343"/>
    </location>
</feature>
<feature type="region of interest" description="Interaction with tRNA" evidence="1">
    <location>
        <begin position="135"/>
        <end position="137"/>
    </location>
</feature>
<feature type="region of interest" description="Interaction with tRNA" evidence="1">
    <location>
        <begin position="289"/>
        <end position="290"/>
    </location>
</feature>
<feature type="active site" description="Nucleophile" evidence="1">
    <location>
        <position position="87"/>
    </location>
</feature>
<feature type="active site" description="Cysteine persulfide intermediate" evidence="1">
    <location>
        <position position="184"/>
    </location>
</feature>
<feature type="binding site" evidence="1">
    <location>
        <begin position="7"/>
        <end position="14"/>
    </location>
    <ligand>
        <name>ATP</name>
        <dbReference type="ChEBI" id="CHEBI:30616"/>
    </ligand>
</feature>
<feature type="binding site" evidence="1">
    <location>
        <position position="33"/>
    </location>
    <ligand>
        <name>ATP</name>
        <dbReference type="ChEBI" id="CHEBI:30616"/>
    </ligand>
</feature>
<feature type="binding site" evidence="1">
    <location>
        <position position="111"/>
    </location>
    <ligand>
        <name>ATP</name>
        <dbReference type="ChEBI" id="CHEBI:30616"/>
    </ligand>
</feature>
<feature type="site" description="Interaction with tRNA" evidence="1">
    <location>
        <position position="112"/>
    </location>
</feature>
<feature type="site" description="Interaction with tRNA" evidence="1">
    <location>
        <position position="322"/>
    </location>
</feature>
<feature type="disulfide bond" description="Alternate" evidence="1">
    <location>
        <begin position="87"/>
        <end position="184"/>
    </location>
</feature>
<evidence type="ECO:0000255" key="1">
    <source>
        <dbReference type="HAMAP-Rule" id="MF_00144"/>
    </source>
</evidence>
<dbReference type="EC" id="2.8.1.13" evidence="1"/>
<dbReference type="EMBL" id="CP000860">
    <property type="protein sequence ID" value="ACA60525.1"/>
    <property type="molecule type" value="Genomic_DNA"/>
</dbReference>
<dbReference type="SMR" id="B1I677"/>
<dbReference type="STRING" id="477974.Daud_2035"/>
<dbReference type="KEGG" id="dau:Daud_2035"/>
<dbReference type="eggNOG" id="COG0482">
    <property type="taxonomic scope" value="Bacteria"/>
</dbReference>
<dbReference type="HOGENOM" id="CLU_035188_0_0_9"/>
<dbReference type="Proteomes" id="UP000008544">
    <property type="component" value="Chromosome"/>
</dbReference>
<dbReference type="GO" id="GO:0005737">
    <property type="term" value="C:cytoplasm"/>
    <property type="evidence" value="ECO:0007669"/>
    <property type="project" value="UniProtKB-SubCell"/>
</dbReference>
<dbReference type="GO" id="GO:0005524">
    <property type="term" value="F:ATP binding"/>
    <property type="evidence" value="ECO:0007669"/>
    <property type="project" value="UniProtKB-KW"/>
</dbReference>
<dbReference type="GO" id="GO:0000049">
    <property type="term" value="F:tRNA binding"/>
    <property type="evidence" value="ECO:0007669"/>
    <property type="project" value="UniProtKB-KW"/>
</dbReference>
<dbReference type="GO" id="GO:0103016">
    <property type="term" value="F:tRNA-uridine 2-sulfurtransferase activity"/>
    <property type="evidence" value="ECO:0007669"/>
    <property type="project" value="UniProtKB-EC"/>
</dbReference>
<dbReference type="GO" id="GO:0002143">
    <property type="term" value="P:tRNA wobble position uridine thiolation"/>
    <property type="evidence" value="ECO:0007669"/>
    <property type="project" value="TreeGrafter"/>
</dbReference>
<dbReference type="CDD" id="cd01998">
    <property type="entry name" value="MnmA_TRMU-like"/>
    <property type="match status" value="1"/>
</dbReference>
<dbReference type="FunFam" id="2.30.30.280:FF:000001">
    <property type="entry name" value="tRNA-specific 2-thiouridylase MnmA"/>
    <property type="match status" value="1"/>
</dbReference>
<dbReference type="Gene3D" id="2.30.30.280">
    <property type="entry name" value="Adenine nucleotide alpha hydrolases-like domains"/>
    <property type="match status" value="1"/>
</dbReference>
<dbReference type="Gene3D" id="3.40.50.620">
    <property type="entry name" value="HUPs"/>
    <property type="match status" value="1"/>
</dbReference>
<dbReference type="Gene3D" id="2.40.30.10">
    <property type="entry name" value="Translation factors"/>
    <property type="match status" value="1"/>
</dbReference>
<dbReference type="HAMAP" id="MF_00144">
    <property type="entry name" value="tRNA_thiouridyl_MnmA"/>
    <property type="match status" value="1"/>
</dbReference>
<dbReference type="InterPro" id="IPR004506">
    <property type="entry name" value="MnmA-like"/>
</dbReference>
<dbReference type="InterPro" id="IPR046885">
    <property type="entry name" value="MnmA-like_C"/>
</dbReference>
<dbReference type="InterPro" id="IPR046884">
    <property type="entry name" value="MnmA-like_central"/>
</dbReference>
<dbReference type="InterPro" id="IPR023382">
    <property type="entry name" value="MnmA-like_central_sf"/>
</dbReference>
<dbReference type="InterPro" id="IPR014729">
    <property type="entry name" value="Rossmann-like_a/b/a_fold"/>
</dbReference>
<dbReference type="NCBIfam" id="NF001138">
    <property type="entry name" value="PRK00143.1"/>
    <property type="match status" value="1"/>
</dbReference>
<dbReference type="NCBIfam" id="TIGR00420">
    <property type="entry name" value="trmU"/>
    <property type="match status" value="1"/>
</dbReference>
<dbReference type="PANTHER" id="PTHR11933:SF5">
    <property type="entry name" value="MITOCHONDRIAL TRNA-SPECIFIC 2-THIOURIDYLASE 1"/>
    <property type="match status" value="1"/>
</dbReference>
<dbReference type="PANTHER" id="PTHR11933">
    <property type="entry name" value="TRNA 5-METHYLAMINOMETHYL-2-THIOURIDYLATE -METHYLTRANSFERASE"/>
    <property type="match status" value="1"/>
</dbReference>
<dbReference type="Pfam" id="PF03054">
    <property type="entry name" value="tRNA_Me_trans"/>
    <property type="match status" value="1"/>
</dbReference>
<dbReference type="Pfam" id="PF20258">
    <property type="entry name" value="tRNA_Me_trans_C"/>
    <property type="match status" value="1"/>
</dbReference>
<dbReference type="Pfam" id="PF20259">
    <property type="entry name" value="tRNA_Me_trans_M"/>
    <property type="match status" value="1"/>
</dbReference>
<dbReference type="SUPFAM" id="SSF52402">
    <property type="entry name" value="Adenine nucleotide alpha hydrolases-like"/>
    <property type="match status" value="1"/>
</dbReference>
<organism>
    <name type="scientific">Desulforudis audaxviator (strain MP104C)</name>
    <dbReference type="NCBI Taxonomy" id="477974"/>
    <lineage>
        <taxon>Bacteria</taxon>
        <taxon>Bacillati</taxon>
        <taxon>Bacillota</taxon>
        <taxon>Clostridia</taxon>
        <taxon>Thermoanaerobacterales</taxon>
        <taxon>Candidatus Desulforudaceae</taxon>
        <taxon>Candidatus Desulforudis</taxon>
    </lineage>
</organism>
<keyword id="KW-0067">ATP-binding</keyword>
<keyword id="KW-0963">Cytoplasm</keyword>
<keyword id="KW-1015">Disulfide bond</keyword>
<keyword id="KW-0547">Nucleotide-binding</keyword>
<keyword id="KW-1185">Reference proteome</keyword>
<keyword id="KW-0694">RNA-binding</keyword>
<keyword id="KW-0808">Transferase</keyword>
<keyword id="KW-0819">tRNA processing</keyword>
<keyword id="KW-0820">tRNA-binding</keyword>
<accession>B1I677</accession>
<gene>
    <name evidence="1" type="primary">mnmA</name>
    <name type="ordered locus">Daud_2035</name>
</gene>
<reference key="1">
    <citation type="submission" date="2007-10" db="EMBL/GenBank/DDBJ databases">
        <title>Complete sequence of chromosome of Desulforudis audaxviator MP104C.</title>
        <authorList>
            <person name="Copeland A."/>
            <person name="Lucas S."/>
            <person name="Lapidus A."/>
            <person name="Barry K."/>
            <person name="Glavina del Rio T."/>
            <person name="Dalin E."/>
            <person name="Tice H."/>
            <person name="Bruce D."/>
            <person name="Pitluck S."/>
            <person name="Lowry S.R."/>
            <person name="Larimer F."/>
            <person name="Land M.L."/>
            <person name="Hauser L."/>
            <person name="Kyrpides N."/>
            <person name="Ivanova N.N."/>
            <person name="Richardson P."/>
        </authorList>
    </citation>
    <scope>NUCLEOTIDE SEQUENCE [LARGE SCALE GENOMIC DNA]</scope>
    <source>
        <strain>MP104C</strain>
    </source>
</reference>
<proteinExistence type="inferred from homology"/>